<name>PURT_PSEU2</name>
<keyword id="KW-0067">ATP-binding</keyword>
<keyword id="KW-0436">Ligase</keyword>
<keyword id="KW-0460">Magnesium</keyword>
<keyword id="KW-0479">Metal-binding</keyword>
<keyword id="KW-0547">Nucleotide-binding</keyword>
<keyword id="KW-0658">Purine biosynthesis</keyword>
<feature type="chain" id="PRO_0000319216" description="Formate-dependent phosphoribosylglycinamide formyltransferase">
    <location>
        <begin position="1"/>
        <end position="393"/>
    </location>
</feature>
<feature type="domain" description="ATP-grasp" evidence="1">
    <location>
        <begin position="119"/>
        <end position="308"/>
    </location>
</feature>
<feature type="binding site" evidence="1">
    <location>
        <begin position="22"/>
        <end position="23"/>
    </location>
    <ligand>
        <name>N(1)-(5-phospho-beta-D-ribosyl)glycinamide</name>
        <dbReference type="ChEBI" id="CHEBI:143788"/>
    </ligand>
</feature>
<feature type="binding site" evidence="1">
    <location>
        <position position="82"/>
    </location>
    <ligand>
        <name>N(1)-(5-phospho-beta-D-ribosyl)glycinamide</name>
        <dbReference type="ChEBI" id="CHEBI:143788"/>
    </ligand>
</feature>
<feature type="binding site" evidence="1">
    <location>
        <position position="114"/>
    </location>
    <ligand>
        <name>ATP</name>
        <dbReference type="ChEBI" id="CHEBI:30616"/>
    </ligand>
</feature>
<feature type="binding site" evidence="1">
    <location>
        <position position="155"/>
    </location>
    <ligand>
        <name>ATP</name>
        <dbReference type="ChEBI" id="CHEBI:30616"/>
    </ligand>
</feature>
<feature type="binding site" evidence="1">
    <location>
        <begin position="160"/>
        <end position="165"/>
    </location>
    <ligand>
        <name>ATP</name>
        <dbReference type="ChEBI" id="CHEBI:30616"/>
    </ligand>
</feature>
<feature type="binding site" evidence="1">
    <location>
        <begin position="195"/>
        <end position="198"/>
    </location>
    <ligand>
        <name>ATP</name>
        <dbReference type="ChEBI" id="CHEBI:30616"/>
    </ligand>
</feature>
<feature type="binding site" evidence="1">
    <location>
        <position position="203"/>
    </location>
    <ligand>
        <name>ATP</name>
        <dbReference type="ChEBI" id="CHEBI:30616"/>
    </ligand>
</feature>
<feature type="binding site" evidence="1">
    <location>
        <position position="267"/>
    </location>
    <ligand>
        <name>Mg(2+)</name>
        <dbReference type="ChEBI" id="CHEBI:18420"/>
    </ligand>
</feature>
<feature type="binding site" evidence="1">
    <location>
        <position position="279"/>
    </location>
    <ligand>
        <name>Mg(2+)</name>
        <dbReference type="ChEBI" id="CHEBI:18420"/>
    </ligand>
</feature>
<feature type="binding site" evidence="1">
    <location>
        <position position="286"/>
    </location>
    <ligand>
        <name>N(1)-(5-phospho-beta-D-ribosyl)glycinamide</name>
        <dbReference type="ChEBI" id="CHEBI:143788"/>
    </ligand>
</feature>
<feature type="binding site" evidence="1">
    <location>
        <position position="356"/>
    </location>
    <ligand>
        <name>N(1)-(5-phospho-beta-D-ribosyl)glycinamide</name>
        <dbReference type="ChEBI" id="CHEBI:143788"/>
    </ligand>
</feature>
<feature type="binding site" evidence="1">
    <location>
        <begin position="363"/>
        <end position="364"/>
    </location>
    <ligand>
        <name>N(1)-(5-phospho-beta-D-ribosyl)glycinamide</name>
        <dbReference type="ChEBI" id="CHEBI:143788"/>
    </ligand>
</feature>
<protein>
    <recommendedName>
        <fullName evidence="1">Formate-dependent phosphoribosylglycinamide formyltransferase</fullName>
        <ecNumber evidence="1">6.3.1.21</ecNumber>
    </recommendedName>
    <alternativeName>
        <fullName evidence="1">5'-phosphoribosylglycinamide transformylase 2</fullName>
    </alternativeName>
    <alternativeName>
        <fullName evidence="1">Formate-dependent GAR transformylase</fullName>
    </alternativeName>
    <alternativeName>
        <fullName evidence="1">GAR transformylase 2</fullName>
        <shortName evidence="1">GART 2</shortName>
    </alternativeName>
    <alternativeName>
        <fullName evidence="1">Non-folate glycinamide ribonucleotide transformylase</fullName>
    </alternativeName>
    <alternativeName>
        <fullName evidence="1">Phosphoribosylglycinamide formyltransferase 2</fullName>
    </alternativeName>
</protein>
<organism>
    <name type="scientific">Pseudomonas syringae pv. syringae (strain B728a)</name>
    <dbReference type="NCBI Taxonomy" id="205918"/>
    <lineage>
        <taxon>Bacteria</taxon>
        <taxon>Pseudomonadati</taxon>
        <taxon>Pseudomonadota</taxon>
        <taxon>Gammaproteobacteria</taxon>
        <taxon>Pseudomonadales</taxon>
        <taxon>Pseudomonadaceae</taxon>
        <taxon>Pseudomonas</taxon>
        <taxon>Pseudomonas syringae</taxon>
    </lineage>
</organism>
<reference key="1">
    <citation type="journal article" date="2005" name="Proc. Natl. Acad. Sci. U.S.A.">
        <title>Comparison of the complete genome sequences of Pseudomonas syringae pv. syringae B728a and pv. tomato DC3000.</title>
        <authorList>
            <person name="Feil H."/>
            <person name="Feil W.S."/>
            <person name="Chain P."/>
            <person name="Larimer F."/>
            <person name="Dibartolo G."/>
            <person name="Copeland A."/>
            <person name="Lykidis A."/>
            <person name="Trong S."/>
            <person name="Nolan M."/>
            <person name="Goltsman E."/>
            <person name="Thiel J."/>
            <person name="Malfatti S."/>
            <person name="Loper J.E."/>
            <person name="Lapidus A."/>
            <person name="Detter J.C."/>
            <person name="Land M."/>
            <person name="Richardson P.M."/>
            <person name="Kyrpides N.C."/>
            <person name="Ivanova N."/>
            <person name="Lindow S.E."/>
        </authorList>
    </citation>
    <scope>NUCLEOTIDE SEQUENCE [LARGE SCALE GENOMIC DNA]</scope>
    <source>
        <strain>B728a</strain>
    </source>
</reference>
<gene>
    <name evidence="1" type="primary">purT</name>
    <name type="ordered locus">Psyr_1277</name>
</gene>
<comment type="function">
    <text evidence="1">Involved in the de novo purine biosynthesis. Catalyzes the transfer of formate to 5-phospho-ribosyl-glycinamide (GAR), producing 5-phospho-ribosyl-N-formylglycinamide (FGAR). Formate is provided by PurU via hydrolysis of 10-formyl-tetrahydrofolate.</text>
</comment>
<comment type="catalytic activity">
    <reaction evidence="1">
        <text>N(1)-(5-phospho-beta-D-ribosyl)glycinamide + formate + ATP = N(2)-formyl-N(1)-(5-phospho-beta-D-ribosyl)glycinamide + ADP + phosphate + H(+)</text>
        <dbReference type="Rhea" id="RHEA:24829"/>
        <dbReference type="ChEBI" id="CHEBI:15378"/>
        <dbReference type="ChEBI" id="CHEBI:15740"/>
        <dbReference type="ChEBI" id="CHEBI:30616"/>
        <dbReference type="ChEBI" id="CHEBI:43474"/>
        <dbReference type="ChEBI" id="CHEBI:143788"/>
        <dbReference type="ChEBI" id="CHEBI:147286"/>
        <dbReference type="ChEBI" id="CHEBI:456216"/>
        <dbReference type="EC" id="6.3.1.21"/>
    </reaction>
    <physiologicalReaction direction="left-to-right" evidence="1">
        <dbReference type="Rhea" id="RHEA:24830"/>
    </physiologicalReaction>
</comment>
<comment type="pathway">
    <text evidence="1">Purine metabolism; IMP biosynthesis via de novo pathway; N(2)-formyl-N(1)-(5-phospho-D-ribosyl)glycinamide from N(1)-(5-phospho-D-ribosyl)glycinamide (formate route): step 1/1.</text>
</comment>
<comment type="subunit">
    <text evidence="1">Homodimer.</text>
</comment>
<comment type="similarity">
    <text evidence="1">Belongs to the PurK/PurT family.</text>
</comment>
<evidence type="ECO:0000255" key="1">
    <source>
        <dbReference type="HAMAP-Rule" id="MF_01643"/>
    </source>
</evidence>
<sequence>MTQIGTPLSPTATRVLFCGSGELGKEVVIELQRLGVEVIAVDRYENAPAMQVAHRSHVINMLDGAALRAVIEAEKPHFIVPEIEAIATATLVELEAEGFTVIPTARAAQLTMNREGIRRLAAEELKLPTSPYHFADTFEAYSKAVEDLGFPCVVKPVMSSSGKGQSLLKSTDDVQKAWDYAQEGGRAGKGRVIVEGFIDFDYEITLLTVRHIGGTTFCAPVGHRQEKGDYQESWQPQAMSPVALAESERVAKAVTEALGGRGMFGVELFIKGDQVWFSEVSPRPHDTGLVTLISQDLSQFALHARAILGLPIPLIRQFGPSASAVILVEGQSTQTAFANLGAALAEPDTALRLFGKPEVNGQRRMGVALARDESIEAARAKATRASQAVNVEL</sequence>
<proteinExistence type="inferred from homology"/>
<accession>Q4ZWZ4</accession>
<dbReference type="EC" id="6.3.1.21" evidence="1"/>
<dbReference type="EMBL" id="CP000075">
    <property type="protein sequence ID" value="AAY36328.1"/>
    <property type="molecule type" value="Genomic_DNA"/>
</dbReference>
<dbReference type="RefSeq" id="WP_004406408.1">
    <property type="nucleotide sequence ID" value="NC_007005.1"/>
</dbReference>
<dbReference type="RefSeq" id="YP_234366.1">
    <property type="nucleotide sequence ID" value="NC_007005.1"/>
</dbReference>
<dbReference type="SMR" id="Q4ZWZ4"/>
<dbReference type="STRING" id="205918.Psyr_1277"/>
<dbReference type="KEGG" id="psb:Psyr_1277"/>
<dbReference type="PATRIC" id="fig|205918.7.peg.1309"/>
<dbReference type="eggNOG" id="COG0027">
    <property type="taxonomic scope" value="Bacteria"/>
</dbReference>
<dbReference type="HOGENOM" id="CLU_011534_1_3_6"/>
<dbReference type="OrthoDB" id="9804625at2"/>
<dbReference type="UniPathway" id="UPA00074">
    <property type="reaction ID" value="UER00127"/>
</dbReference>
<dbReference type="Proteomes" id="UP000000426">
    <property type="component" value="Chromosome"/>
</dbReference>
<dbReference type="GO" id="GO:0005829">
    <property type="term" value="C:cytosol"/>
    <property type="evidence" value="ECO:0007669"/>
    <property type="project" value="TreeGrafter"/>
</dbReference>
<dbReference type="GO" id="GO:0005524">
    <property type="term" value="F:ATP binding"/>
    <property type="evidence" value="ECO:0007669"/>
    <property type="project" value="UniProtKB-UniRule"/>
</dbReference>
<dbReference type="GO" id="GO:0000287">
    <property type="term" value="F:magnesium ion binding"/>
    <property type="evidence" value="ECO:0007669"/>
    <property type="project" value="InterPro"/>
</dbReference>
<dbReference type="GO" id="GO:0043815">
    <property type="term" value="F:phosphoribosylglycinamide formyltransferase 2 activity"/>
    <property type="evidence" value="ECO:0007669"/>
    <property type="project" value="UniProtKB-UniRule"/>
</dbReference>
<dbReference type="GO" id="GO:0004644">
    <property type="term" value="F:phosphoribosylglycinamide formyltransferase activity"/>
    <property type="evidence" value="ECO:0007669"/>
    <property type="project" value="InterPro"/>
</dbReference>
<dbReference type="GO" id="GO:0006189">
    <property type="term" value="P:'de novo' IMP biosynthetic process"/>
    <property type="evidence" value="ECO:0007669"/>
    <property type="project" value="UniProtKB-UniRule"/>
</dbReference>
<dbReference type="FunFam" id="3.30.1490.20:FF:000013">
    <property type="entry name" value="Formate-dependent phosphoribosylglycinamide formyltransferase"/>
    <property type="match status" value="1"/>
</dbReference>
<dbReference type="FunFam" id="3.30.470.20:FF:000027">
    <property type="entry name" value="Formate-dependent phosphoribosylglycinamide formyltransferase"/>
    <property type="match status" value="1"/>
</dbReference>
<dbReference type="FunFam" id="3.40.50.20:FF:000007">
    <property type="entry name" value="Formate-dependent phosphoribosylglycinamide formyltransferase"/>
    <property type="match status" value="1"/>
</dbReference>
<dbReference type="Gene3D" id="3.40.50.20">
    <property type="match status" value="1"/>
</dbReference>
<dbReference type="Gene3D" id="3.30.1490.20">
    <property type="entry name" value="ATP-grasp fold, A domain"/>
    <property type="match status" value="1"/>
</dbReference>
<dbReference type="Gene3D" id="3.30.470.20">
    <property type="entry name" value="ATP-grasp fold, B domain"/>
    <property type="match status" value="1"/>
</dbReference>
<dbReference type="HAMAP" id="MF_01643">
    <property type="entry name" value="PurT"/>
    <property type="match status" value="1"/>
</dbReference>
<dbReference type="InterPro" id="IPR011761">
    <property type="entry name" value="ATP-grasp"/>
</dbReference>
<dbReference type="InterPro" id="IPR003135">
    <property type="entry name" value="ATP-grasp_carboxylate-amine"/>
</dbReference>
<dbReference type="InterPro" id="IPR013815">
    <property type="entry name" value="ATP_grasp_subdomain_1"/>
</dbReference>
<dbReference type="InterPro" id="IPR016185">
    <property type="entry name" value="PreATP-grasp_dom_sf"/>
</dbReference>
<dbReference type="InterPro" id="IPR005862">
    <property type="entry name" value="PurT"/>
</dbReference>
<dbReference type="InterPro" id="IPR054350">
    <property type="entry name" value="PurT/PurK_preATP-grasp"/>
</dbReference>
<dbReference type="InterPro" id="IPR048740">
    <property type="entry name" value="PurT_C"/>
</dbReference>
<dbReference type="NCBIfam" id="NF006766">
    <property type="entry name" value="PRK09288.1"/>
    <property type="match status" value="1"/>
</dbReference>
<dbReference type="NCBIfam" id="TIGR01142">
    <property type="entry name" value="purT"/>
    <property type="match status" value="1"/>
</dbReference>
<dbReference type="PANTHER" id="PTHR43055">
    <property type="entry name" value="FORMATE-DEPENDENT PHOSPHORIBOSYLGLYCINAMIDE FORMYLTRANSFERASE"/>
    <property type="match status" value="1"/>
</dbReference>
<dbReference type="PANTHER" id="PTHR43055:SF1">
    <property type="entry name" value="FORMATE-DEPENDENT PHOSPHORIBOSYLGLYCINAMIDE FORMYLTRANSFERASE"/>
    <property type="match status" value="1"/>
</dbReference>
<dbReference type="Pfam" id="PF02222">
    <property type="entry name" value="ATP-grasp"/>
    <property type="match status" value="1"/>
</dbReference>
<dbReference type="Pfam" id="PF21244">
    <property type="entry name" value="PurT_C"/>
    <property type="match status" value="1"/>
</dbReference>
<dbReference type="Pfam" id="PF22660">
    <property type="entry name" value="RS_preATP-grasp-like"/>
    <property type="match status" value="1"/>
</dbReference>
<dbReference type="SUPFAM" id="SSF56059">
    <property type="entry name" value="Glutathione synthetase ATP-binding domain-like"/>
    <property type="match status" value="1"/>
</dbReference>
<dbReference type="SUPFAM" id="SSF52440">
    <property type="entry name" value="PreATP-grasp domain"/>
    <property type="match status" value="1"/>
</dbReference>
<dbReference type="PROSITE" id="PS50975">
    <property type="entry name" value="ATP_GRASP"/>
    <property type="match status" value="1"/>
</dbReference>